<keyword id="KW-0436">Ligase</keyword>
<keyword id="KW-0597">Phosphoprotein</keyword>
<keyword id="KW-0662">Pyridine nucleotide biosynthesis</keyword>
<keyword id="KW-1185">Reference proteome</keyword>
<proteinExistence type="inferred from homology"/>
<sequence length="399" mass="46095">MAESVFAERIVQNLLDTDFYKLTMMQAVLHNYPNAEVEWEFRCRNAEDLRPYLAEIRYQIERLAEVEVTADQLAFLERIPFMKPDFIRFLSLFRFNLRYVHTGIEDGQLAIRLRGPWLHVILFEVPLLAIVSEVRNRYRYREVVLEQVGEQLYRKLDWLSAQASSEELAEFQVADFGTRRRFSYRTQEEVVHILKRDFPGRFVGTSNVHLAREYDLKPIGTMAHEWLMAHQQLGPRLVDSQQAALDCWVREYRGQLGIALTDCITMDAFLDDFDLYFAKLFDGLRHDSGDPLAWAEKAIAHYRRLGIDPLSKTLVFSDGLDMPKALQLFRALRGKINVSFGIGTNLTCDIPGVEPMNIVLKMTACNGHPVAKISDAPGKTQCRDENFVAYLRHVFNVPA</sequence>
<reference key="1">
    <citation type="journal article" date="2000" name="Nature">
        <title>Complete genome sequence of Pseudomonas aeruginosa PAO1, an opportunistic pathogen.</title>
        <authorList>
            <person name="Stover C.K."/>
            <person name="Pham X.-Q.T."/>
            <person name="Erwin A.L."/>
            <person name="Mizoguchi S.D."/>
            <person name="Warrener P."/>
            <person name="Hickey M.J."/>
            <person name="Brinkman F.S.L."/>
            <person name="Hufnagle W.O."/>
            <person name="Kowalik D.J."/>
            <person name="Lagrou M."/>
            <person name="Garber R.L."/>
            <person name="Goltry L."/>
            <person name="Tolentino E."/>
            <person name="Westbrock-Wadman S."/>
            <person name="Yuan Y."/>
            <person name="Brody L.L."/>
            <person name="Coulter S.N."/>
            <person name="Folger K.R."/>
            <person name="Kas A."/>
            <person name="Larbig K."/>
            <person name="Lim R.M."/>
            <person name="Smith K.A."/>
            <person name="Spencer D.H."/>
            <person name="Wong G.K.-S."/>
            <person name="Wu Z."/>
            <person name="Paulsen I.T."/>
            <person name="Reizer J."/>
            <person name="Saier M.H. Jr."/>
            <person name="Hancock R.E.W."/>
            <person name="Lory S."/>
            <person name="Olson M.V."/>
        </authorList>
    </citation>
    <scope>NUCLEOTIDE SEQUENCE [LARGE SCALE GENOMIC DNA]</scope>
    <source>
        <strain>ATCC 15692 / DSM 22644 / CIP 104116 / JCM 14847 / LMG 12228 / 1C / PRS 101 / PAO1</strain>
    </source>
</reference>
<protein>
    <recommendedName>
        <fullName evidence="1">Nicotinate phosphoribosyltransferase 1</fullName>
        <shortName evidence="1">NAPRTase 1</shortName>
        <ecNumber evidence="1">6.3.4.21</ecNumber>
    </recommendedName>
</protein>
<name>PNCB1_PSEAE</name>
<comment type="function">
    <text evidence="1">Catalyzes the synthesis of beta-nicotinate D-ribonucleotide from nicotinate and 5-phospho-D-ribose 1-phosphate at the expense of ATP.</text>
</comment>
<comment type="catalytic activity">
    <reaction evidence="1">
        <text>nicotinate + 5-phospho-alpha-D-ribose 1-diphosphate + ATP + H2O = nicotinate beta-D-ribonucleotide + ADP + phosphate + diphosphate</text>
        <dbReference type="Rhea" id="RHEA:36163"/>
        <dbReference type="ChEBI" id="CHEBI:15377"/>
        <dbReference type="ChEBI" id="CHEBI:30616"/>
        <dbReference type="ChEBI" id="CHEBI:32544"/>
        <dbReference type="ChEBI" id="CHEBI:33019"/>
        <dbReference type="ChEBI" id="CHEBI:43474"/>
        <dbReference type="ChEBI" id="CHEBI:57502"/>
        <dbReference type="ChEBI" id="CHEBI:58017"/>
        <dbReference type="ChEBI" id="CHEBI:456216"/>
        <dbReference type="EC" id="6.3.4.21"/>
    </reaction>
</comment>
<comment type="pathway">
    <text evidence="1">Cofactor biosynthesis; NAD(+) biosynthesis; nicotinate D-ribonucleotide from nicotinate: step 1/1.</text>
</comment>
<comment type="PTM">
    <text evidence="1">Transiently phosphorylated on a His residue during the reaction cycle. Phosphorylation strongly increases the affinity for substrates and increases the rate of nicotinate D-ribonucleotide production. Dephosphorylation regenerates the low-affinity form of the enzyme, leading to product release.</text>
</comment>
<comment type="similarity">
    <text evidence="1">Belongs to the NAPRTase family.</text>
</comment>
<gene>
    <name evidence="1" type="primary">pncB1</name>
    <name type="ordered locus">PA4919</name>
</gene>
<dbReference type="EC" id="6.3.4.21" evidence="1"/>
<dbReference type="EMBL" id="AE004091">
    <property type="protein sequence ID" value="AAG08304.1"/>
    <property type="molecule type" value="Genomic_DNA"/>
</dbReference>
<dbReference type="PIR" id="E83030">
    <property type="entry name" value="E83030"/>
</dbReference>
<dbReference type="RefSeq" id="NP_253606.1">
    <property type="nucleotide sequence ID" value="NC_002516.2"/>
</dbReference>
<dbReference type="SMR" id="Q9HUP4"/>
<dbReference type="FunCoup" id="Q9HUP4">
    <property type="interactions" value="411"/>
</dbReference>
<dbReference type="STRING" id="208964.PA4919"/>
<dbReference type="PaxDb" id="208964-PA4919"/>
<dbReference type="GeneID" id="882212"/>
<dbReference type="KEGG" id="pae:PA4919"/>
<dbReference type="PATRIC" id="fig|208964.12.peg.5152"/>
<dbReference type="PseudoCAP" id="PA4919"/>
<dbReference type="HOGENOM" id="CLU_030991_1_0_6"/>
<dbReference type="InParanoid" id="Q9HUP4"/>
<dbReference type="OrthoDB" id="9771406at2"/>
<dbReference type="PhylomeDB" id="Q9HUP4"/>
<dbReference type="BioCyc" id="PAER208964:G1FZ6-5033-MONOMER"/>
<dbReference type="UniPathway" id="UPA00253">
    <property type="reaction ID" value="UER00457"/>
</dbReference>
<dbReference type="Proteomes" id="UP000002438">
    <property type="component" value="Chromosome"/>
</dbReference>
<dbReference type="GO" id="GO:0005829">
    <property type="term" value="C:cytosol"/>
    <property type="evidence" value="ECO:0000318"/>
    <property type="project" value="GO_Central"/>
</dbReference>
<dbReference type="GO" id="GO:0004516">
    <property type="term" value="F:nicotinate phosphoribosyltransferase activity"/>
    <property type="evidence" value="ECO:0000318"/>
    <property type="project" value="GO_Central"/>
</dbReference>
<dbReference type="GO" id="GO:0034355">
    <property type="term" value="P:NAD biosynthetic process via the salvage pathway"/>
    <property type="evidence" value="ECO:0000318"/>
    <property type="project" value="GO_Central"/>
</dbReference>
<dbReference type="CDD" id="cd01401">
    <property type="entry name" value="PncB_like"/>
    <property type="match status" value="1"/>
</dbReference>
<dbReference type="FunFam" id="3.20.140.10:FF:000001">
    <property type="entry name" value="Nicotinate phosphoribosyltransferase"/>
    <property type="match status" value="1"/>
</dbReference>
<dbReference type="Gene3D" id="3.20.140.10">
    <property type="entry name" value="nicotinate phosphoribosyltransferase"/>
    <property type="match status" value="1"/>
</dbReference>
<dbReference type="HAMAP" id="MF_00570">
    <property type="entry name" value="NAPRTase"/>
    <property type="match status" value="1"/>
</dbReference>
<dbReference type="InterPro" id="IPR041525">
    <property type="entry name" value="N/Namide_PRibTrfase"/>
</dbReference>
<dbReference type="InterPro" id="IPR040727">
    <property type="entry name" value="NAPRTase_N"/>
</dbReference>
<dbReference type="InterPro" id="IPR006406">
    <property type="entry name" value="Nic_PRibTrfase"/>
</dbReference>
<dbReference type="InterPro" id="IPR007229">
    <property type="entry name" value="Nic_PRibTrfase-Fam"/>
</dbReference>
<dbReference type="InterPro" id="IPR036068">
    <property type="entry name" value="Nicotinate_pribotase-like_C"/>
</dbReference>
<dbReference type="NCBIfam" id="TIGR01514">
    <property type="entry name" value="NAPRTase"/>
    <property type="match status" value="1"/>
</dbReference>
<dbReference type="NCBIfam" id="NF003704">
    <property type="entry name" value="PRK05321.1"/>
    <property type="match status" value="1"/>
</dbReference>
<dbReference type="PANTHER" id="PTHR11098">
    <property type="entry name" value="NICOTINATE PHOSPHORIBOSYLTRANSFERASE"/>
    <property type="match status" value="1"/>
</dbReference>
<dbReference type="PANTHER" id="PTHR11098:SF1">
    <property type="entry name" value="NICOTINATE PHOSPHORIBOSYLTRANSFERASE"/>
    <property type="match status" value="1"/>
</dbReference>
<dbReference type="Pfam" id="PF04095">
    <property type="entry name" value="NAPRTase"/>
    <property type="match status" value="1"/>
</dbReference>
<dbReference type="Pfam" id="PF17767">
    <property type="entry name" value="NAPRTase_N"/>
    <property type="match status" value="1"/>
</dbReference>
<dbReference type="PIRSF" id="PIRSF000484">
    <property type="entry name" value="NAPRT"/>
    <property type="match status" value="1"/>
</dbReference>
<dbReference type="SUPFAM" id="SSF51690">
    <property type="entry name" value="Nicotinate/Quinolinate PRTase C-terminal domain-like"/>
    <property type="match status" value="1"/>
</dbReference>
<dbReference type="SUPFAM" id="SSF54675">
    <property type="entry name" value="Nicotinate/Quinolinate PRTase N-terminal domain-like"/>
    <property type="match status" value="1"/>
</dbReference>
<organism>
    <name type="scientific">Pseudomonas aeruginosa (strain ATCC 15692 / DSM 22644 / CIP 104116 / JCM 14847 / LMG 12228 / 1C / PRS 101 / PAO1)</name>
    <dbReference type="NCBI Taxonomy" id="208964"/>
    <lineage>
        <taxon>Bacteria</taxon>
        <taxon>Pseudomonadati</taxon>
        <taxon>Pseudomonadota</taxon>
        <taxon>Gammaproteobacteria</taxon>
        <taxon>Pseudomonadales</taxon>
        <taxon>Pseudomonadaceae</taxon>
        <taxon>Pseudomonas</taxon>
    </lineage>
</organism>
<evidence type="ECO:0000255" key="1">
    <source>
        <dbReference type="HAMAP-Rule" id="MF_00570"/>
    </source>
</evidence>
<feature type="chain" id="PRO_0000205837" description="Nicotinate phosphoribosyltransferase 1">
    <location>
        <begin position="1"/>
        <end position="399"/>
    </location>
</feature>
<feature type="modified residue" description="Phosphohistidine; by autocatalysis" evidence="1">
    <location>
        <position position="224"/>
    </location>
</feature>
<accession>Q9HUP4</accession>